<evidence type="ECO:0000255" key="1">
    <source>
        <dbReference type="HAMAP-Rule" id="MF_01038"/>
    </source>
</evidence>
<name>GPMI_BACFR</name>
<feature type="chain" id="PRO_0000212130" description="2,3-bisphosphoglycerate-independent phosphoglycerate mutase">
    <location>
        <begin position="1"/>
        <end position="504"/>
    </location>
</feature>
<feature type="active site" description="Phosphoserine intermediate" evidence="1">
    <location>
        <position position="61"/>
    </location>
</feature>
<feature type="binding site" evidence="1">
    <location>
        <position position="11"/>
    </location>
    <ligand>
        <name>Mn(2+)</name>
        <dbReference type="ChEBI" id="CHEBI:29035"/>
        <label>2</label>
    </ligand>
</feature>
<feature type="binding site" evidence="1">
    <location>
        <position position="61"/>
    </location>
    <ligand>
        <name>Mn(2+)</name>
        <dbReference type="ChEBI" id="CHEBI:29035"/>
        <label>2</label>
    </ligand>
</feature>
<feature type="binding site" evidence="1">
    <location>
        <position position="122"/>
    </location>
    <ligand>
        <name>substrate</name>
    </ligand>
</feature>
<feature type="binding site" evidence="1">
    <location>
        <begin position="152"/>
        <end position="153"/>
    </location>
    <ligand>
        <name>substrate</name>
    </ligand>
</feature>
<feature type="binding site" evidence="1">
    <location>
        <position position="183"/>
    </location>
    <ligand>
        <name>substrate</name>
    </ligand>
</feature>
<feature type="binding site" evidence="1">
    <location>
        <position position="189"/>
    </location>
    <ligand>
        <name>substrate</name>
    </ligand>
</feature>
<feature type="binding site" evidence="1">
    <location>
        <begin position="255"/>
        <end position="258"/>
    </location>
    <ligand>
        <name>substrate</name>
    </ligand>
</feature>
<feature type="binding site" evidence="1">
    <location>
        <position position="329"/>
    </location>
    <ligand>
        <name>substrate</name>
    </ligand>
</feature>
<feature type="binding site" evidence="1">
    <location>
        <position position="396"/>
    </location>
    <ligand>
        <name>Mn(2+)</name>
        <dbReference type="ChEBI" id="CHEBI:29035"/>
        <label>1</label>
    </ligand>
</feature>
<feature type="binding site" evidence="1">
    <location>
        <position position="400"/>
    </location>
    <ligand>
        <name>Mn(2+)</name>
        <dbReference type="ChEBI" id="CHEBI:29035"/>
        <label>1</label>
    </ligand>
</feature>
<feature type="binding site" evidence="1">
    <location>
        <position position="437"/>
    </location>
    <ligand>
        <name>Mn(2+)</name>
        <dbReference type="ChEBI" id="CHEBI:29035"/>
        <label>2</label>
    </ligand>
</feature>
<feature type="binding site" evidence="1">
    <location>
        <position position="438"/>
    </location>
    <ligand>
        <name>Mn(2+)</name>
        <dbReference type="ChEBI" id="CHEBI:29035"/>
        <label>2</label>
    </ligand>
</feature>
<feature type="binding site" evidence="1">
    <location>
        <position position="455"/>
    </location>
    <ligand>
        <name>Mn(2+)</name>
        <dbReference type="ChEBI" id="CHEBI:29035"/>
        <label>1</label>
    </ligand>
</feature>
<proteinExistence type="inferred from homology"/>
<comment type="function">
    <text evidence="1">Catalyzes the interconversion of 2-phosphoglycerate and 3-phosphoglycerate.</text>
</comment>
<comment type="catalytic activity">
    <reaction evidence="1">
        <text>(2R)-2-phosphoglycerate = (2R)-3-phosphoglycerate</text>
        <dbReference type="Rhea" id="RHEA:15901"/>
        <dbReference type="ChEBI" id="CHEBI:58272"/>
        <dbReference type="ChEBI" id="CHEBI:58289"/>
        <dbReference type="EC" id="5.4.2.12"/>
    </reaction>
</comment>
<comment type="cofactor">
    <cofactor evidence="1">
        <name>Mn(2+)</name>
        <dbReference type="ChEBI" id="CHEBI:29035"/>
    </cofactor>
    <text evidence="1">Binds 2 manganese ions per subunit.</text>
</comment>
<comment type="pathway">
    <text evidence="1">Carbohydrate degradation; glycolysis; pyruvate from D-glyceraldehyde 3-phosphate: step 3/5.</text>
</comment>
<comment type="subunit">
    <text evidence="1">Monomer.</text>
</comment>
<comment type="similarity">
    <text evidence="1">Belongs to the BPG-independent phosphoglycerate mutase family.</text>
</comment>
<accession>Q64ZN5</accession>
<sequence>MSKKALLMILDGWGLGDHGKDDVIFNTATPYWDYLMETYPHSQLQASGENVGLPDGQMGNSEVGHLNIGAGRVVYQDLVKINLSCRDNSILKNPEIVSAFSYAKENGKNVHFMGLTSDGGVHSSLDHLFKLCDIAKEYNIENTFVHCFMDGRDTDPKSGKGFIEQLEAHCAKSAGKVASIIGRYYAMDRDKRWERVKEAYDLLVNGIGKKATDMVQAMQESYDEGVTDEFIKPIVNAGVDGTIKEGDVVIFFNYRNDRAKELTVVLTQQDMPEAGMHTIPGLQYYCMTPYDASFKGVHILFDKENVANTLGEYLAANGKKQLHIAETEKYAHVTFFFNGGRETPYDNEDRILVPSPKVATYDLKPEMSAYEVKDKLVAAINENKYDFIVVNYANGDMVGHTGIYEAIEKAVVAVDACVKDTIEAAKAQGYEAIIIADHGNADHALNEDGTPNTAHSLNPVPCVYVTENKEAKVADGRLADVAPTILHILDMVQPAEMTGCNLIK</sequence>
<gene>
    <name evidence="1" type="primary">gpmI</name>
    <name type="ordered locus">BF0292</name>
</gene>
<keyword id="KW-0324">Glycolysis</keyword>
<keyword id="KW-0413">Isomerase</keyword>
<keyword id="KW-0464">Manganese</keyword>
<keyword id="KW-0479">Metal-binding</keyword>
<reference key="1">
    <citation type="journal article" date="2004" name="Proc. Natl. Acad. Sci. U.S.A.">
        <title>Genomic analysis of Bacteroides fragilis reveals extensive DNA inversions regulating cell surface adaptation.</title>
        <authorList>
            <person name="Kuwahara T."/>
            <person name="Yamashita A."/>
            <person name="Hirakawa H."/>
            <person name="Nakayama H."/>
            <person name="Toh H."/>
            <person name="Okada N."/>
            <person name="Kuhara S."/>
            <person name="Hattori M."/>
            <person name="Hayashi T."/>
            <person name="Ohnishi Y."/>
        </authorList>
    </citation>
    <scope>NUCLEOTIDE SEQUENCE [LARGE SCALE GENOMIC DNA]</scope>
    <source>
        <strain>YCH46</strain>
    </source>
</reference>
<protein>
    <recommendedName>
        <fullName evidence="1">2,3-bisphosphoglycerate-independent phosphoglycerate mutase</fullName>
        <shortName evidence="1">BPG-independent PGAM</shortName>
        <shortName evidence="1">Phosphoglyceromutase</shortName>
        <shortName evidence="1">iPGM</shortName>
        <ecNumber evidence="1">5.4.2.12</ecNumber>
    </recommendedName>
</protein>
<dbReference type="EC" id="5.4.2.12" evidence="1"/>
<dbReference type="EMBL" id="AP006841">
    <property type="protein sequence ID" value="BAD47041.1"/>
    <property type="molecule type" value="Genomic_DNA"/>
</dbReference>
<dbReference type="RefSeq" id="WP_005783975.1">
    <property type="nucleotide sequence ID" value="NZ_UYXF01000014.1"/>
</dbReference>
<dbReference type="RefSeq" id="YP_097575.1">
    <property type="nucleotide sequence ID" value="NC_006347.1"/>
</dbReference>
<dbReference type="SMR" id="Q64ZN5"/>
<dbReference type="STRING" id="295405.BF0292"/>
<dbReference type="KEGG" id="bfr:BF0292"/>
<dbReference type="PATRIC" id="fig|295405.11.peg.316"/>
<dbReference type="HOGENOM" id="CLU_026099_2_0_10"/>
<dbReference type="OrthoDB" id="9800863at2"/>
<dbReference type="UniPathway" id="UPA00109">
    <property type="reaction ID" value="UER00186"/>
</dbReference>
<dbReference type="Proteomes" id="UP000002197">
    <property type="component" value="Chromosome"/>
</dbReference>
<dbReference type="GO" id="GO:0005829">
    <property type="term" value="C:cytosol"/>
    <property type="evidence" value="ECO:0007669"/>
    <property type="project" value="TreeGrafter"/>
</dbReference>
<dbReference type="GO" id="GO:0030145">
    <property type="term" value="F:manganese ion binding"/>
    <property type="evidence" value="ECO:0007669"/>
    <property type="project" value="UniProtKB-UniRule"/>
</dbReference>
<dbReference type="GO" id="GO:0004619">
    <property type="term" value="F:phosphoglycerate mutase activity"/>
    <property type="evidence" value="ECO:0007669"/>
    <property type="project" value="UniProtKB-EC"/>
</dbReference>
<dbReference type="GO" id="GO:0006007">
    <property type="term" value="P:glucose catabolic process"/>
    <property type="evidence" value="ECO:0007669"/>
    <property type="project" value="InterPro"/>
</dbReference>
<dbReference type="GO" id="GO:0006096">
    <property type="term" value="P:glycolytic process"/>
    <property type="evidence" value="ECO:0007669"/>
    <property type="project" value="UniProtKB-UniRule"/>
</dbReference>
<dbReference type="CDD" id="cd16010">
    <property type="entry name" value="iPGM"/>
    <property type="match status" value="1"/>
</dbReference>
<dbReference type="FunFam" id="3.40.1450.10:FF:000002">
    <property type="entry name" value="2,3-bisphosphoglycerate-independent phosphoglycerate mutase"/>
    <property type="match status" value="1"/>
</dbReference>
<dbReference type="FunFam" id="3.40.720.10:FF:000001">
    <property type="entry name" value="2,3-bisphosphoglycerate-independent phosphoglycerate mutase"/>
    <property type="match status" value="1"/>
</dbReference>
<dbReference type="Gene3D" id="3.40.720.10">
    <property type="entry name" value="Alkaline Phosphatase, subunit A"/>
    <property type="match status" value="1"/>
</dbReference>
<dbReference type="Gene3D" id="3.40.1450.10">
    <property type="entry name" value="BPG-independent phosphoglycerate mutase, domain B"/>
    <property type="match status" value="1"/>
</dbReference>
<dbReference type="HAMAP" id="MF_01038">
    <property type="entry name" value="GpmI"/>
    <property type="match status" value="1"/>
</dbReference>
<dbReference type="InterPro" id="IPR017850">
    <property type="entry name" value="Alkaline_phosphatase_core_sf"/>
</dbReference>
<dbReference type="InterPro" id="IPR011258">
    <property type="entry name" value="BPG-indep_PGM_N"/>
</dbReference>
<dbReference type="InterPro" id="IPR006124">
    <property type="entry name" value="Metalloenzyme"/>
</dbReference>
<dbReference type="InterPro" id="IPR036646">
    <property type="entry name" value="PGAM_B_sf"/>
</dbReference>
<dbReference type="InterPro" id="IPR005995">
    <property type="entry name" value="Pgm_bpd_ind"/>
</dbReference>
<dbReference type="NCBIfam" id="TIGR01307">
    <property type="entry name" value="pgm_bpd_ind"/>
    <property type="match status" value="1"/>
</dbReference>
<dbReference type="PANTHER" id="PTHR31637">
    <property type="entry name" value="2,3-BISPHOSPHOGLYCERATE-INDEPENDENT PHOSPHOGLYCERATE MUTASE"/>
    <property type="match status" value="1"/>
</dbReference>
<dbReference type="PANTHER" id="PTHR31637:SF0">
    <property type="entry name" value="2,3-BISPHOSPHOGLYCERATE-INDEPENDENT PHOSPHOGLYCERATE MUTASE"/>
    <property type="match status" value="1"/>
</dbReference>
<dbReference type="Pfam" id="PF06415">
    <property type="entry name" value="iPGM_N"/>
    <property type="match status" value="1"/>
</dbReference>
<dbReference type="Pfam" id="PF01676">
    <property type="entry name" value="Metalloenzyme"/>
    <property type="match status" value="1"/>
</dbReference>
<dbReference type="PIRSF" id="PIRSF001492">
    <property type="entry name" value="IPGAM"/>
    <property type="match status" value="1"/>
</dbReference>
<dbReference type="SUPFAM" id="SSF64158">
    <property type="entry name" value="2,3-Bisphosphoglycerate-independent phosphoglycerate mutase, substrate-binding domain"/>
    <property type="match status" value="1"/>
</dbReference>
<dbReference type="SUPFAM" id="SSF53649">
    <property type="entry name" value="Alkaline phosphatase-like"/>
    <property type="match status" value="1"/>
</dbReference>
<organism>
    <name type="scientific">Bacteroides fragilis (strain YCH46)</name>
    <dbReference type="NCBI Taxonomy" id="295405"/>
    <lineage>
        <taxon>Bacteria</taxon>
        <taxon>Pseudomonadati</taxon>
        <taxon>Bacteroidota</taxon>
        <taxon>Bacteroidia</taxon>
        <taxon>Bacteroidales</taxon>
        <taxon>Bacteroidaceae</taxon>
        <taxon>Bacteroides</taxon>
    </lineage>
</organism>